<reference key="1">
    <citation type="journal article" date="1994" name="Nature">
        <title>2.2 Mb of contiguous nucleotide sequence from chromosome III of C. elegans.</title>
        <authorList>
            <person name="Wilson R."/>
            <person name="Ainscough R."/>
            <person name="Anderson K."/>
            <person name="Baynes C."/>
            <person name="Berks M."/>
            <person name="Bonfield J."/>
            <person name="Burton J."/>
            <person name="Connell M."/>
            <person name="Copsey T."/>
            <person name="Cooper J."/>
            <person name="Coulson A."/>
            <person name="Craxton M."/>
            <person name="Dear S."/>
            <person name="Du Z."/>
            <person name="Durbin R."/>
            <person name="Favello A."/>
            <person name="Fraser A."/>
            <person name="Fulton L."/>
            <person name="Gardner A."/>
            <person name="Green P."/>
            <person name="Hawkins T."/>
            <person name="Hillier L."/>
            <person name="Jier M."/>
            <person name="Johnston L."/>
            <person name="Jones M."/>
            <person name="Kershaw J."/>
            <person name="Kirsten J."/>
            <person name="Laisster N."/>
            <person name="Latreille P."/>
            <person name="Lightning J."/>
            <person name="Lloyd C."/>
            <person name="Mortimore B."/>
            <person name="O'Callaghan M."/>
            <person name="Parsons J."/>
            <person name="Percy C."/>
            <person name="Rifken L."/>
            <person name="Roopra A."/>
            <person name="Saunders D."/>
            <person name="Shownkeen R."/>
            <person name="Sims M."/>
            <person name="Smaldon N."/>
            <person name="Smith A."/>
            <person name="Smith M."/>
            <person name="Sonnhammer E."/>
            <person name="Staden R."/>
            <person name="Sulston J."/>
            <person name="Thierry-Mieg J."/>
            <person name="Thomas K."/>
            <person name="Vaudin M."/>
            <person name="Vaughan K."/>
            <person name="Waterston R."/>
            <person name="Watson A."/>
            <person name="Weinstock L."/>
            <person name="Wilkinson-Sproat J."/>
            <person name="Wohldman P."/>
        </authorList>
    </citation>
    <scope>NUCLEOTIDE SEQUENCE [LARGE SCALE GENOMIC DNA]</scope>
    <source>
        <strain>Bristol N2</strain>
    </source>
</reference>
<reference key="2">
    <citation type="journal article" date="1998" name="Science">
        <title>Genome sequence of the nematode C. elegans: a platform for investigating biology.</title>
        <authorList>
            <consortium name="The C. elegans sequencing consortium"/>
        </authorList>
    </citation>
    <scope>NUCLEOTIDE SEQUENCE [LARGE SCALE GENOMIC DNA]</scope>
    <scope>ALTERNATIVE SPLICING</scope>
    <source>
        <strain>Bristol N2</strain>
    </source>
</reference>
<reference key="3">
    <citation type="journal article" date="2010" name="Cell">
        <title>Two cyclin-dependent kinase pathways are essential for polarized trafficking of presynaptic components.</title>
        <authorList>
            <person name="Ou C.Y."/>
            <person name="Poon V.Y."/>
            <person name="Maeder C.I."/>
            <person name="Watanabe S."/>
            <person name="Lehrman E.K."/>
            <person name="Fu A.K."/>
            <person name="Park M."/>
            <person name="Fu W.Y."/>
            <person name="Jorgensen E.M."/>
            <person name="Ip N.Y."/>
            <person name="Shen K."/>
        </authorList>
    </citation>
    <scope>FUNCTION</scope>
    <scope>INTERACTION WITH PCT-1</scope>
    <scope>DISRUPTION PHENOTYPE</scope>
</reference>
<reference key="4">
    <citation type="journal article" date="2011" name="Neuron">
        <title>CYY-1/cyclin Y and CDK-5 differentially regulate synapse elimination and formation for rewiring neural circuits.</title>
        <authorList>
            <person name="Park M."/>
            <person name="Watanabe S."/>
            <person name="Poon V.Y."/>
            <person name="Ou C.Y."/>
            <person name="Jorgensen E.M."/>
            <person name="Shen K."/>
        </authorList>
    </citation>
    <scope>FUNCTION</scope>
    <scope>DISRUPTION PHENOTYPE</scope>
</reference>
<organism evidence="7">
    <name type="scientific">Caenorhabditis elegans</name>
    <dbReference type="NCBI Taxonomy" id="6239"/>
    <lineage>
        <taxon>Eukaryota</taxon>
        <taxon>Metazoa</taxon>
        <taxon>Ecdysozoa</taxon>
        <taxon>Nematoda</taxon>
        <taxon>Chromadorea</taxon>
        <taxon>Rhabditida</taxon>
        <taxon>Rhabditina</taxon>
        <taxon>Rhabditomorpha</taxon>
        <taxon>Rhabditoidea</taxon>
        <taxon>Rhabditidae</taxon>
        <taxon>Peloderinae</taxon>
        <taxon>Caenorhabditis</taxon>
    </lineage>
</organism>
<evidence type="ECO:0000255" key="1"/>
<evidence type="ECO:0000256" key="2">
    <source>
        <dbReference type="SAM" id="MobiDB-lite"/>
    </source>
</evidence>
<evidence type="ECO:0000269" key="3">
    <source>
    </source>
</evidence>
<evidence type="ECO:0000269" key="4">
    <source>
    </source>
</evidence>
<evidence type="ECO:0000305" key="5"/>
<evidence type="ECO:0000305" key="6">
    <source>
    </source>
</evidence>
<evidence type="ECO:0000312" key="7">
    <source>
        <dbReference type="Proteomes" id="UP000001940"/>
    </source>
</evidence>
<evidence type="ECO:0000312" key="8">
    <source>
        <dbReference type="WormBase" id="ZK353.1b"/>
    </source>
</evidence>
<comment type="function">
    <text evidence="3 4">In association with pct-1, regulates the trafficking of synaptic vesicle precursors in DA motor neurons by promoting anterograde trafficking to the axon and preventing dynein-dependent trafficking to the dendrite. May also regulate synaptic vesicle trafficking in DD motor neurons and in RIA interneurons (PubMed:20510931). Involved in synapse formation during DD motor neuron remodeling by disassembling ventral presynaptic structures (PubMed:21609829). May activate cdk-5 (PubMed:20510931).</text>
</comment>
<comment type="subunit">
    <text evidence="3">Interacts with pct-1; the interaction is required to activate pct-1.</text>
</comment>
<comment type="interaction">
    <interactant intactId="EBI-2696495">
        <id>P34624</id>
    </interactant>
    <interactant intactId="EBI-2918577">
        <id>Q8I7M8</id>
        <label>pct-1</label>
    </interactant>
    <organismsDiffer>false</organismsDiffer>
    <experiments>2</experiments>
</comment>
<comment type="subcellular location">
    <subcellularLocation>
        <location evidence="3">Cytoplasm</location>
    </subcellularLocation>
    <subcellularLocation>
        <location evidence="3">Cell projection</location>
        <location evidence="3">Dendrite</location>
    </subcellularLocation>
    <subcellularLocation>
        <location evidence="3">Cell projection</location>
        <location evidence="3">Axon</location>
    </subcellularLocation>
    <text evidence="3">Enriched in the dendrite and the proximal axon of the DA motor neuron.</text>
</comment>
<comment type="alternative products">
    <event type="alternative splicing"/>
    <isoform>
        <id>P34624-1</id>
        <name>b</name>
        <sequence type="displayed"/>
    </isoform>
    <isoform>
        <id>P34624-2</id>
        <name>a</name>
        <sequence type="described" ref="VSP_002453"/>
    </isoform>
</comment>
<comment type="disruption phenotype">
    <text evidence="3 4">Abnormal localization of synaptic vesicle components and active zone proteins in the cell body and in the dentrite of DA9 motor neuron (PubMed:20510931). In L4 mutants, incomplete elimination of ventral rab-3-positive synaptic vesicles and small reduction in the formation of dorsal rab-3-positive synaptic vesicles in DD motor neurons, although formation of ventral synapses at the L1 stage is normal (PubMed:21609829). No other phenotype except a slightly smaller progeny size (PubMed:20510931).</text>
</comment>
<comment type="similarity">
    <text evidence="5">Belongs to the cyclin family.</text>
</comment>
<proteinExistence type="evidence at protein level"/>
<keyword id="KW-0025">Alternative splicing</keyword>
<keyword id="KW-0131">Cell cycle</keyword>
<keyword id="KW-0132">Cell division</keyword>
<keyword id="KW-0966">Cell projection</keyword>
<keyword id="KW-0195">Cyclin</keyword>
<keyword id="KW-0963">Cytoplasm</keyword>
<keyword id="KW-0524">Neurogenesis</keyword>
<keyword id="KW-1185">Reference proteome</keyword>
<keyword id="KW-0813">Transport</keyword>
<gene>
    <name evidence="8" type="primary">cyy-1</name>
    <name evidence="8" type="ORF">ZK353.1</name>
</gene>
<protein>
    <recommendedName>
        <fullName evidence="6">Cyclin-Y</fullName>
    </recommendedName>
</protein>
<accession>P34624</accession>
<sequence length="357" mass="41507">MGNSSCCLRTRSSSGEDKSYNNDGQYIRTNQVEFQYVNQVFPRDETSTNFLPHISEREVTEGYEEDPSTNPTARPTFMERSKSEMKLKDNRRSCYMLDALAAGGHHPGILPRSLRKSSSCSTIYIDDSTVSQPHLKNTIKCISLAIYYHISNRKNRGHERLMEIFEERLHPIFRDPIPPEQMTRDPDHRNIYRFVRNLFSSAQLTAECAIITLVYIERLLNYAEMDLCPSNWRRVVLGSIMLASKVWDDQAVWNVDYCQILRDTNVDDMNELERRFLECLDFNIEVPSSVYAKYYFDLRTLALANDLQLPIQPLYKERAQRLEALSRVFEDKIQSSSLPKRARSAEHLVFEHPAVLS</sequence>
<feature type="chain" id="PRO_0000080516" description="Cyclin-Y">
    <location>
        <begin position="1"/>
        <end position="357"/>
    </location>
</feature>
<feature type="domain" description="Cyclin N-terminal" evidence="1">
    <location>
        <begin position="186"/>
        <end position="284"/>
    </location>
</feature>
<feature type="region of interest" description="Disordered" evidence="2">
    <location>
        <begin position="1"/>
        <end position="23"/>
    </location>
</feature>
<feature type="compositionally biased region" description="Polar residues" evidence="2">
    <location>
        <begin position="1"/>
        <end position="13"/>
    </location>
</feature>
<feature type="splice variant" id="VSP_002453" description="In isoform a." evidence="5">
    <location>
        <begin position="34"/>
        <end position="35"/>
    </location>
</feature>
<dbReference type="EMBL" id="FO081668">
    <property type="protein sequence ID" value="CCD73200.1"/>
    <property type="molecule type" value="Genomic_DNA"/>
</dbReference>
<dbReference type="EMBL" id="FO081668">
    <property type="protein sequence ID" value="CCD73201.1"/>
    <property type="molecule type" value="Genomic_DNA"/>
</dbReference>
<dbReference type="RefSeq" id="NP_498857.2">
    <molecule id="P34624-1"/>
    <property type="nucleotide sequence ID" value="NM_066456.6"/>
</dbReference>
<dbReference type="RefSeq" id="NP_498858.2">
    <molecule id="P34624-2"/>
    <property type="nucleotide sequence ID" value="NM_066457.6"/>
</dbReference>
<dbReference type="SMR" id="P34624"/>
<dbReference type="BioGRID" id="41392">
    <property type="interactions" value="1"/>
</dbReference>
<dbReference type="ComplexPortal" id="CPX-4962">
    <property type="entry name" value="CyclinY-CDK17 complex"/>
</dbReference>
<dbReference type="FunCoup" id="P34624">
    <property type="interactions" value="2601"/>
</dbReference>
<dbReference type="IntAct" id="P34624">
    <property type="interactions" value="1"/>
</dbReference>
<dbReference type="STRING" id="6239.ZK353.1b.1"/>
<dbReference type="iPTMnet" id="P34624"/>
<dbReference type="PaxDb" id="6239-ZK353.1b"/>
<dbReference type="PeptideAtlas" id="P34624"/>
<dbReference type="EnsemblMetazoa" id="ZK353.1a.1">
    <molecule id="P34624-2"/>
    <property type="protein sequence ID" value="ZK353.1a.1"/>
    <property type="gene ID" value="WBGene00022697"/>
</dbReference>
<dbReference type="EnsemblMetazoa" id="ZK353.1b.1">
    <molecule id="P34624-1"/>
    <property type="protein sequence ID" value="ZK353.1b.1"/>
    <property type="gene ID" value="WBGene00022697"/>
</dbReference>
<dbReference type="GeneID" id="176188"/>
<dbReference type="KEGG" id="cel:CELE_ZK353.1"/>
<dbReference type="UCSC" id="ZK353.1b">
    <molecule id="P34624-1"/>
    <property type="organism name" value="c. elegans"/>
</dbReference>
<dbReference type="AGR" id="WB:WBGene00022697"/>
<dbReference type="CTD" id="176188"/>
<dbReference type="WormBase" id="ZK353.1a">
    <molecule id="P34624-2"/>
    <property type="protein sequence ID" value="CE34452"/>
    <property type="gene ID" value="WBGene00022697"/>
    <property type="gene designation" value="cyy-1"/>
</dbReference>
<dbReference type="WormBase" id="ZK353.1b">
    <molecule id="P34624-1"/>
    <property type="protein sequence ID" value="CE34453"/>
    <property type="gene ID" value="WBGene00022697"/>
    <property type="gene designation" value="cyy-1"/>
</dbReference>
<dbReference type="eggNOG" id="KOG1675">
    <property type="taxonomic scope" value="Eukaryota"/>
</dbReference>
<dbReference type="GeneTree" id="ENSGT00940000154453"/>
<dbReference type="InParanoid" id="P34624"/>
<dbReference type="OMA" id="KNRAHER"/>
<dbReference type="OrthoDB" id="10250320at2759"/>
<dbReference type="PhylomeDB" id="P34624"/>
<dbReference type="PRO" id="PR:P34624"/>
<dbReference type="Proteomes" id="UP000001940">
    <property type="component" value="Chromosome III"/>
</dbReference>
<dbReference type="Bgee" id="WBGene00022697">
    <property type="expression patterns" value="Expressed in embryo and 4 other cell types or tissues"/>
</dbReference>
<dbReference type="GO" id="GO:0030424">
    <property type="term" value="C:axon"/>
    <property type="evidence" value="ECO:0000314"/>
    <property type="project" value="WormBase"/>
</dbReference>
<dbReference type="GO" id="GO:1904115">
    <property type="term" value="C:axon cytoplasm"/>
    <property type="evidence" value="ECO:0007669"/>
    <property type="project" value="GOC"/>
</dbReference>
<dbReference type="GO" id="GO:0000307">
    <property type="term" value="C:cyclin-dependent protein kinase holoenzyme complex"/>
    <property type="evidence" value="ECO:0000353"/>
    <property type="project" value="ComplexPortal"/>
</dbReference>
<dbReference type="GO" id="GO:0030425">
    <property type="term" value="C:dendrite"/>
    <property type="evidence" value="ECO:0000314"/>
    <property type="project" value="WormBase"/>
</dbReference>
<dbReference type="GO" id="GO:0005886">
    <property type="term" value="C:plasma membrane"/>
    <property type="evidence" value="ECO:0000318"/>
    <property type="project" value="GO_Central"/>
</dbReference>
<dbReference type="GO" id="GO:0019901">
    <property type="term" value="F:protein kinase binding"/>
    <property type="evidence" value="ECO:0007669"/>
    <property type="project" value="InterPro"/>
</dbReference>
<dbReference type="GO" id="GO:0008089">
    <property type="term" value="P:anterograde axonal transport"/>
    <property type="evidence" value="ECO:0000303"/>
    <property type="project" value="ComplexPortal"/>
</dbReference>
<dbReference type="GO" id="GO:0051301">
    <property type="term" value="P:cell division"/>
    <property type="evidence" value="ECO:0007669"/>
    <property type="project" value="UniProtKB-KW"/>
</dbReference>
<dbReference type="GO" id="GO:0051964">
    <property type="term" value="P:negative regulation of synapse assembly"/>
    <property type="evidence" value="ECO:0000315"/>
    <property type="project" value="UniProtKB"/>
</dbReference>
<dbReference type="GO" id="GO:0007399">
    <property type="term" value="P:nervous system development"/>
    <property type="evidence" value="ECO:0007669"/>
    <property type="project" value="UniProtKB-KW"/>
</dbReference>
<dbReference type="GO" id="GO:0060828">
    <property type="term" value="P:regulation of canonical Wnt signaling pathway"/>
    <property type="evidence" value="ECO:0000318"/>
    <property type="project" value="GO_Central"/>
</dbReference>
<dbReference type="GO" id="GO:1904799">
    <property type="term" value="P:regulation of neuron remodeling"/>
    <property type="evidence" value="ECO:0000315"/>
    <property type="project" value="UniProtKB"/>
</dbReference>
<dbReference type="GO" id="GO:2000331">
    <property type="term" value="P:regulation of terminal button organization"/>
    <property type="evidence" value="ECO:0000315"/>
    <property type="project" value="UniProtKB"/>
</dbReference>
<dbReference type="GO" id="GO:0048489">
    <property type="term" value="P:synaptic vesicle transport"/>
    <property type="evidence" value="ECO:0000303"/>
    <property type="project" value="ComplexPortal"/>
</dbReference>
<dbReference type="CDD" id="cd20540">
    <property type="entry name" value="CYCLIN_CCNY_like"/>
    <property type="match status" value="1"/>
</dbReference>
<dbReference type="FunFam" id="1.10.472.10:FF:000123">
    <property type="entry name" value="Cyclin-Y-like protein 2"/>
    <property type="match status" value="1"/>
</dbReference>
<dbReference type="Gene3D" id="1.10.472.10">
    <property type="entry name" value="Cyclin-like"/>
    <property type="match status" value="1"/>
</dbReference>
<dbReference type="InterPro" id="IPR013763">
    <property type="entry name" value="Cyclin-like_dom"/>
</dbReference>
<dbReference type="InterPro" id="IPR036915">
    <property type="entry name" value="Cyclin-like_sf"/>
</dbReference>
<dbReference type="InterPro" id="IPR006671">
    <property type="entry name" value="Cyclin_N"/>
</dbReference>
<dbReference type="InterPro" id="IPR012399">
    <property type="entry name" value="Cyclin_Y"/>
</dbReference>
<dbReference type="PANTHER" id="PTHR14248">
    <property type="entry name" value="CYCLIN Y, ISOFORM A"/>
    <property type="match status" value="1"/>
</dbReference>
<dbReference type="Pfam" id="PF00134">
    <property type="entry name" value="Cyclin_N"/>
    <property type="match status" value="1"/>
</dbReference>
<dbReference type="PIRSF" id="PIRSF028934">
    <property type="entry name" value="Cyclin_CG14939"/>
    <property type="match status" value="1"/>
</dbReference>
<dbReference type="SMART" id="SM00385">
    <property type="entry name" value="CYCLIN"/>
    <property type="match status" value="1"/>
</dbReference>
<dbReference type="SUPFAM" id="SSF47954">
    <property type="entry name" value="Cyclin-like"/>
    <property type="match status" value="1"/>
</dbReference>
<name>CCNY_CAEEL</name>